<reference key="1">
    <citation type="journal article" date="2000" name="Nature">
        <title>Sequence and analysis of chromosome 3 of the plant Arabidopsis thaliana.</title>
        <authorList>
            <person name="Salanoubat M."/>
            <person name="Lemcke K."/>
            <person name="Rieger M."/>
            <person name="Ansorge W."/>
            <person name="Unseld M."/>
            <person name="Fartmann B."/>
            <person name="Valle G."/>
            <person name="Bloecker H."/>
            <person name="Perez-Alonso M."/>
            <person name="Obermaier B."/>
            <person name="Delseny M."/>
            <person name="Boutry M."/>
            <person name="Grivell L.A."/>
            <person name="Mache R."/>
            <person name="Puigdomenech P."/>
            <person name="De Simone V."/>
            <person name="Choisne N."/>
            <person name="Artiguenave F."/>
            <person name="Robert C."/>
            <person name="Brottier P."/>
            <person name="Wincker P."/>
            <person name="Cattolico L."/>
            <person name="Weissenbach J."/>
            <person name="Saurin W."/>
            <person name="Quetier F."/>
            <person name="Schaefer M."/>
            <person name="Mueller-Auer S."/>
            <person name="Gabel C."/>
            <person name="Fuchs M."/>
            <person name="Benes V."/>
            <person name="Wurmbach E."/>
            <person name="Drzonek H."/>
            <person name="Erfle H."/>
            <person name="Jordan N."/>
            <person name="Bangert S."/>
            <person name="Wiedelmann R."/>
            <person name="Kranz H."/>
            <person name="Voss H."/>
            <person name="Holland R."/>
            <person name="Brandt P."/>
            <person name="Nyakatura G."/>
            <person name="Vezzi A."/>
            <person name="D'Angelo M."/>
            <person name="Pallavicini A."/>
            <person name="Toppo S."/>
            <person name="Simionati B."/>
            <person name="Conrad A."/>
            <person name="Hornischer K."/>
            <person name="Kauer G."/>
            <person name="Loehnert T.-H."/>
            <person name="Nordsiek G."/>
            <person name="Reichelt J."/>
            <person name="Scharfe M."/>
            <person name="Schoen O."/>
            <person name="Bargues M."/>
            <person name="Terol J."/>
            <person name="Climent J."/>
            <person name="Navarro P."/>
            <person name="Collado C."/>
            <person name="Perez-Perez A."/>
            <person name="Ottenwaelder B."/>
            <person name="Duchemin D."/>
            <person name="Cooke R."/>
            <person name="Laudie M."/>
            <person name="Berger-Llauro C."/>
            <person name="Purnelle B."/>
            <person name="Masuy D."/>
            <person name="de Haan M."/>
            <person name="Maarse A.C."/>
            <person name="Alcaraz J.-P."/>
            <person name="Cottet A."/>
            <person name="Casacuberta E."/>
            <person name="Monfort A."/>
            <person name="Argiriou A."/>
            <person name="Flores M."/>
            <person name="Liguori R."/>
            <person name="Vitale D."/>
            <person name="Mannhaupt G."/>
            <person name="Haase D."/>
            <person name="Schoof H."/>
            <person name="Rudd S."/>
            <person name="Zaccaria P."/>
            <person name="Mewes H.-W."/>
            <person name="Mayer K.F.X."/>
            <person name="Kaul S."/>
            <person name="Town C.D."/>
            <person name="Koo H.L."/>
            <person name="Tallon L.J."/>
            <person name="Jenkins J."/>
            <person name="Rooney T."/>
            <person name="Rizzo M."/>
            <person name="Walts A."/>
            <person name="Utterback T."/>
            <person name="Fujii C.Y."/>
            <person name="Shea T.P."/>
            <person name="Creasy T.H."/>
            <person name="Haas B."/>
            <person name="Maiti R."/>
            <person name="Wu D."/>
            <person name="Peterson J."/>
            <person name="Van Aken S."/>
            <person name="Pai G."/>
            <person name="Militscher J."/>
            <person name="Sellers P."/>
            <person name="Gill J.E."/>
            <person name="Feldblyum T.V."/>
            <person name="Preuss D."/>
            <person name="Lin X."/>
            <person name="Nierman W.C."/>
            <person name="Salzberg S.L."/>
            <person name="White O."/>
            <person name="Venter J.C."/>
            <person name="Fraser C.M."/>
            <person name="Kaneko T."/>
            <person name="Nakamura Y."/>
            <person name="Sato S."/>
            <person name="Kato T."/>
            <person name="Asamizu E."/>
            <person name="Sasamoto S."/>
            <person name="Kimura T."/>
            <person name="Idesawa K."/>
            <person name="Kawashima K."/>
            <person name="Kishida Y."/>
            <person name="Kiyokawa C."/>
            <person name="Kohara M."/>
            <person name="Matsumoto M."/>
            <person name="Matsuno A."/>
            <person name="Muraki A."/>
            <person name="Nakayama S."/>
            <person name="Nakazaki N."/>
            <person name="Shinpo S."/>
            <person name="Takeuchi C."/>
            <person name="Wada T."/>
            <person name="Watanabe A."/>
            <person name="Yamada M."/>
            <person name="Yasuda M."/>
            <person name="Tabata S."/>
        </authorList>
    </citation>
    <scope>NUCLEOTIDE SEQUENCE [LARGE SCALE GENOMIC DNA]</scope>
    <source>
        <strain>cv. Columbia</strain>
    </source>
</reference>
<reference key="2">
    <citation type="journal article" date="2017" name="Plant J.">
        <title>Araport11: a complete reannotation of the Arabidopsis thaliana reference genome.</title>
        <authorList>
            <person name="Cheng C.Y."/>
            <person name="Krishnakumar V."/>
            <person name="Chan A.P."/>
            <person name="Thibaud-Nissen F."/>
            <person name="Schobel S."/>
            <person name="Town C.D."/>
        </authorList>
    </citation>
    <scope>GENOME REANNOTATION</scope>
    <source>
        <strain>cv. Columbia</strain>
    </source>
</reference>
<reference key="3">
    <citation type="submission" date="2005-03" db="EMBL/GenBank/DDBJ databases">
        <title>Large-scale analysis of RIKEN Arabidopsis full-length (RAFL) cDNAs.</title>
        <authorList>
            <person name="Totoki Y."/>
            <person name="Seki M."/>
            <person name="Ishida J."/>
            <person name="Nakajima M."/>
            <person name="Enju A."/>
            <person name="Kamiya A."/>
            <person name="Narusaka M."/>
            <person name="Shin-i T."/>
            <person name="Nakagawa M."/>
            <person name="Sakamoto N."/>
            <person name="Oishi K."/>
            <person name="Kohara Y."/>
            <person name="Kobayashi M."/>
            <person name="Toyoda A."/>
            <person name="Sakaki Y."/>
            <person name="Sakurai T."/>
            <person name="Iida K."/>
            <person name="Akiyama K."/>
            <person name="Satou M."/>
            <person name="Toyoda T."/>
            <person name="Konagaya A."/>
            <person name="Carninci P."/>
            <person name="Kawai J."/>
            <person name="Hayashizaki Y."/>
            <person name="Shinozaki K."/>
        </authorList>
    </citation>
    <scope>NUCLEOTIDE SEQUENCE [LARGE SCALE MRNA] OF 1898-2197</scope>
    <source>
        <strain>cv. Columbia</strain>
    </source>
</reference>
<reference key="4">
    <citation type="journal article" date="2012" name="Mol. Cell. Proteomics">
        <title>Comparative large-scale characterisation of plant vs. mammal proteins reveals similar and idiosyncratic N-alpha acetylation features.</title>
        <authorList>
            <person name="Bienvenut W.V."/>
            <person name="Sumpton D."/>
            <person name="Martinez A."/>
            <person name="Lilla S."/>
            <person name="Espagne C."/>
            <person name="Meinnel T."/>
            <person name="Giglione C."/>
        </authorList>
    </citation>
    <scope>ACETYLATION [LARGE SCALE ANALYSIS] AT SER-2</scope>
    <scope>CLEAVAGE OF INITIATOR METHIONINE [LARGE SCALE ANALYSIS]</scope>
    <scope>IDENTIFICATION BY MASS SPECTROMETRY [LARGE SCALE ANALYSIS]</scope>
</reference>
<name>HEAT1_ARATH</name>
<protein>
    <recommendedName>
        <fullName>Uncharacterized protein At3g06530</fullName>
    </recommendedName>
</protein>
<accession>Q9C8Z4</accession>
<accession>F4JAY2</accession>
<accession>Q56X73</accession>
<sequence length="2197" mass="246322">MSSSIVSQLQALKSVLQADTEPSKRPFTRPSILFSPKEAADFDIESIYELGLKGLEVLGNKDERFKNYMNDLFSHKSKEIDRELLGKEENARIDSSISSYLRLLSGYLQFRASLETLEYLIRRYKIHIYNLEDVVLCALPYHDTHAFVRIVQLLSTGNSKWKFLDGVKNSGAPPPRSVIVQQCIRDKQVLEALCDYASRTKKYQPSKPVVSFSTAVVVGVLGSVPTVDGDIVKTILPFVDSGLQSGVKGCLDQQAGALMVVGMLANRAVLNTNLIKRLMRSIIDIGREHAKESSDPHSLRLSLMALINFVQLQSVDLIPRKALDLFNEIRDISGVLLGLSKEFNIKRFLAVLLDSLLFYSSSDDKCCEVLASIIETVPVSNLVDHLISKVFSLCMTQYQKNSDFRSSTSGSWAKKFLVVVSKKYPAELRAAVPKFLEATEVQSKKEDLKLEMLSCMLDGNSDMSHPFVDSKLWFRLHHPRAAVRCAALSSLNGVLKDDSSKAENLVTIQDAILRQLWDDDLAVVQAALSFDKLPNIITSSGLLDALLHVVKRCVGILVSGVSHNVQLAVDVVALSLKIAVSSFGNQTDSTEKVTSAMFPFLLIQPKTWNLNLLVLKLGKDVNWPLFKNLAADDGMKKLPDIMSTNLSSISMDIINDLGEALSLDPDERRIELIERACNYKLSEVLETCSNIKCSEQDRNKLQKGLLIRESVSALNIDVINKLVEAFMMHPADYIQWLTVSCRDSTLSKTLFYMILMHSLQKMNSSSDPSQLLDLFELCFPVLKTEWEELEVEVDVSLKELSKSNCQELLYQLLDTSDFTALNSKVLICLFWKLGESFIKLEPAHDASVLNKRLSSGLEDLFFFFATTRLRHVFKEHLHFRVREAKVCPVLFLSRLISREDVPPLVQIESLRCFSYLCSSGNNEWLIQVFSSFPVLLVPMSSDNQDVKAAAINCIEALFNLRAAIYGSSFDELLGMIVQQRRLILSDNKFFASYLTSLLSSTTNDLLVPVGLQKRFDQSTKENILSVILLCAEDLPAYGKLRVLSLLKDLGIMLMRDEIVKLLSQLLDKRSQYYYKLDKTSQPLSDTEVDLLCLLLECSMMRTSSFKGQSLDDHILSALNVDCMASERPAVISPCLTILEKLSNRFYDELQTDVQIRFFHKLVSMFRSSNGSIQNGAKEAVLRLKLSSSTVVLALDRITQQDTLVIGSLSKKKKQKKNSKSCPEEDINSEEFRSGEKALSFIASLLDMLLLKKDLTHRESLIRPLFKLLQRSMSKEWVKIAFSIEETSLQPPQDVRETTPTFISSIQQTLLLILKDIFDSLNMNPLKAEVANEINVKMLVELAHSSNDGVTRNHIFSLFTAIVKFVPDKVLDHIISILTLVGESTVTQIDSHSKSIFEGFISMVIPFWLSKTKSEEQLLQIFVKVLPDIVEHRRRSIVAYLLGVIGERNGLPALLVLLFKSLISRKDSAWLGNANVSESFASIVKKEWEYSFAMEICEQYSSSTWLSSLVILLQTISKDSKQCFLQMRLVLEFVFQKLQDPEFAFAVSLEPRNNVSVGIQQELQELMKCCICLLQAIDAKKEKDVTSSVRNEIRMRIHDVLMTVTGAMDLSIYFRVVTSLLQQQTDYNGTKKVLGLISERAKDTSSSKMKHKRKISNQKGRNSWLNLDEVAVDSFGKMCEEIVHLINATDDESGVPVKRAAISTLEVLAGRFPSGHPIFRKCLAAVAECISSKNLGVSSSCLRTTGALINVLGPKALIELPCIMKNLVKQSLEVSFASQSGRNATAEEQLLMLSVLVTLEAVIDKLGGFLNPHLGDIMKIMVLHPEYVSDFDKNLKSKANAIRRLLTDKIPVRLTLQPLLRIYNEAVSSGNASLVIAFNMLEDLVVKMDRSSIVSSHGKIFDQCLVALDIRRLNPAAIQNIDDAERSVTSAMVALTKKLTESEFRPLFIRSIDWAESDVVDGSGSENKSIDRAISFYGLVDRLCESHRSIFVPYFKYVLDGIVAHLTTAEASVSTRKKKKAKIQQTSDSIQPKSWHLRALVLSCLKNCFLHDTGSLKFLDTNNFQVLLKPIVSQLVVEPPSSLKEHPHVPSVDEVDDLLVSCIGQMAVASGSDLLWKPLNHEVLMQTRSESVRSRMLSLRSVKQMLDNLKEEYLVLLAETIPFLAELLEDVELSVKSLAQDIIKQMEEMSGESLAEYL</sequence>
<organism>
    <name type="scientific">Arabidopsis thaliana</name>
    <name type="common">Mouse-ear cress</name>
    <dbReference type="NCBI Taxonomy" id="3702"/>
    <lineage>
        <taxon>Eukaryota</taxon>
        <taxon>Viridiplantae</taxon>
        <taxon>Streptophyta</taxon>
        <taxon>Embryophyta</taxon>
        <taxon>Tracheophyta</taxon>
        <taxon>Spermatophyta</taxon>
        <taxon>Magnoliopsida</taxon>
        <taxon>eudicotyledons</taxon>
        <taxon>Gunneridae</taxon>
        <taxon>Pentapetalae</taxon>
        <taxon>rosids</taxon>
        <taxon>malvids</taxon>
        <taxon>Brassicales</taxon>
        <taxon>Brassicaceae</taxon>
        <taxon>Camelineae</taxon>
        <taxon>Arabidopsis</taxon>
    </lineage>
</organism>
<proteinExistence type="evidence at protein level"/>
<feature type="initiator methionine" description="Removed" evidence="3">
    <location>
        <position position="1"/>
    </location>
</feature>
<feature type="chain" id="PRO_0000186205" description="Uncharacterized protein At3g06530">
    <location>
        <begin position="2"/>
        <end position="2197"/>
    </location>
</feature>
<feature type="repeat" description="HEAT">
    <location>
        <begin position="2159"/>
        <end position="2195"/>
    </location>
</feature>
<feature type="modified residue" description="N-acetylserine" evidence="3">
    <location>
        <position position="2"/>
    </location>
</feature>
<dbReference type="EMBL" id="AC020580">
    <property type="protein sequence ID" value="AAG51331.1"/>
    <property type="status" value="ALT_SEQ"/>
    <property type="molecule type" value="Genomic_DNA"/>
</dbReference>
<dbReference type="EMBL" id="CP002686">
    <property type="protein sequence ID" value="AEE74407.1"/>
    <property type="molecule type" value="Genomic_DNA"/>
</dbReference>
<dbReference type="EMBL" id="AK221804">
    <property type="protein sequence ID" value="BAD93973.1"/>
    <property type="molecule type" value="mRNA"/>
</dbReference>
<dbReference type="RefSeq" id="NP_187305.5">
    <molecule id="Q9C8Z4-1"/>
    <property type="nucleotide sequence ID" value="NM_111529.6"/>
</dbReference>
<dbReference type="SMR" id="Q9C8Z4"/>
<dbReference type="BioGRID" id="5166">
    <property type="interactions" value="12"/>
</dbReference>
<dbReference type="FunCoup" id="Q9C8Z4">
    <property type="interactions" value="4025"/>
</dbReference>
<dbReference type="IntAct" id="Q9C8Z4">
    <property type="interactions" value="1"/>
</dbReference>
<dbReference type="STRING" id="3702.Q9C8Z4"/>
<dbReference type="iPTMnet" id="Q9C8Z4"/>
<dbReference type="PaxDb" id="3702-AT3G06530.2"/>
<dbReference type="ProteomicsDB" id="247355">
    <molecule id="Q9C8Z4-1"/>
</dbReference>
<dbReference type="EnsemblPlants" id="AT3G06530.1">
    <molecule id="Q9C8Z4-1"/>
    <property type="protein sequence ID" value="AT3G06530.1"/>
    <property type="gene ID" value="AT3G06530"/>
</dbReference>
<dbReference type="GeneID" id="819831"/>
<dbReference type="Gramene" id="AT3G06530.1">
    <molecule id="Q9C8Z4-1"/>
    <property type="protein sequence ID" value="AT3G06530.1"/>
    <property type="gene ID" value="AT3G06530"/>
</dbReference>
<dbReference type="KEGG" id="ath:AT3G06530"/>
<dbReference type="Araport" id="AT3G06530"/>
<dbReference type="TAIR" id="AT3G06530"/>
<dbReference type="eggNOG" id="KOG1837">
    <property type="taxonomic scope" value="Eukaryota"/>
</dbReference>
<dbReference type="HOGENOM" id="CLU_001128_3_0_1"/>
<dbReference type="InParanoid" id="Q9C8Z4"/>
<dbReference type="PRO" id="PR:Q9C8Z4"/>
<dbReference type="Proteomes" id="UP000006548">
    <property type="component" value="Chromosome 3"/>
</dbReference>
<dbReference type="ExpressionAtlas" id="Q9C8Z4">
    <property type="expression patterns" value="baseline and differential"/>
</dbReference>
<dbReference type="GO" id="GO:0005730">
    <property type="term" value="C:nucleolus"/>
    <property type="evidence" value="ECO:0007669"/>
    <property type="project" value="UniProtKB-SubCell"/>
</dbReference>
<dbReference type="GO" id="GO:1990904">
    <property type="term" value="C:ribonucleoprotein complex"/>
    <property type="evidence" value="ECO:0007669"/>
    <property type="project" value="UniProtKB-KW"/>
</dbReference>
<dbReference type="GO" id="GO:0006364">
    <property type="term" value="P:rRNA processing"/>
    <property type="evidence" value="ECO:0007669"/>
    <property type="project" value="UniProtKB-KW"/>
</dbReference>
<dbReference type="Gene3D" id="1.25.10.10">
    <property type="entry name" value="Leucine-rich Repeat Variant"/>
    <property type="match status" value="1"/>
</dbReference>
<dbReference type="InterPro" id="IPR011989">
    <property type="entry name" value="ARM-like"/>
</dbReference>
<dbReference type="InterPro" id="IPR016024">
    <property type="entry name" value="ARM-type_fold"/>
</dbReference>
<dbReference type="InterPro" id="IPR056384">
    <property type="entry name" value="ARM_At3g06530"/>
</dbReference>
<dbReference type="InterPro" id="IPR012954">
    <property type="entry name" value="BP28_C_dom"/>
</dbReference>
<dbReference type="InterPro" id="IPR056473">
    <property type="entry name" value="HEAT_Utp10/HEAT1"/>
</dbReference>
<dbReference type="InterPro" id="IPR022125">
    <property type="entry name" value="U3snoRNP10_N"/>
</dbReference>
<dbReference type="InterPro" id="IPR040191">
    <property type="entry name" value="UTP10"/>
</dbReference>
<dbReference type="PANTHER" id="PTHR13457">
    <property type="entry name" value="BAP28"/>
    <property type="match status" value="1"/>
</dbReference>
<dbReference type="PANTHER" id="PTHR13457:SF1">
    <property type="entry name" value="HEAT REPEAT-CONTAINING PROTEIN 1"/>
    <property type="match status" value="1"/>
</dbReference>
<dbReference type="Pfam" id="PF24477">
    <property type="entry name" value="ARM_At3g06530"/>
    <property type="match status" value="1"/>
</dbReference>
<dbReference type="Pfam" id="PF08146">
    <property type="entry name" value="BP28CT"/>
    <property type="match status" value="1"/>
</dbReference>
<dbReference type="Pfam" id="PF23243">
    <property type="entry name" value="HEAT_HEATR1"/>
    <property type="match status" value="1"/>
</dbReference>
<dbReference type="Pfam" id="PF12397">
    <property type="entry name" value="U3snoRNP10"/>
    <property type="match status" value="1"/>
</dbReference>
<dbReference type="SMART" id="SM01036">
    <property type="entry name" value="BP28CT"/>
    <property type="match status" value="1"/>
</dbReference>
<dbReference type="SUPFAM" id="SSF48371">
    <property type="entry name" value="ARM repeat"/>
    <property type="match status" value="3"/>
</dbReference>
<evidence type="ECO:0000250" key="1"/>
<evidence type="ECO:0000305" key="2"/>
<evidence type="ECO:0007744" key="3">
    <source>
    </source>
</evidence>
<gene>
    <name type="ordered locus">At3g06530</name>
    <name type="ORF">F5E6.14</name>
</gene>
<comment type="function">
    <text evidence="1">Involved in nucleolar processing of pre-18S ribosomal RNA. Involved in ribosome biosynthesis (By similarity).</text>
</comment>
<comment type="subcellular location">
    <subcellularLocation>
        <location evidence="1">Nucleus</location>
        <location evidence="1">Nucleolus</location>
    </subcellularLocation>
</comment>
<comment type="alternative products">
    <event type="alternative splicing"/>
    <isoform>
        <id>Q9C8Z4-1</id>
        <name>1</name>
        <sequence type="displayed"/>
    </isoform>
    <text>A number of isoforms are produced. According to EST sequences.</text>
</comment>
<comment type="similarity">
    <text evidence="2">Belongs to the HEATR1/UTP10 family.</text>
</comment>
<comment type="sequence caution" evidence="2">
    <conflict type="erroneous gene model prediction">
        <sequence resource="EMBL-CDS" id="AAG51331"/>
    </conflict>
</comment>
<keyword id="KW-0007">Acetylation</keyword>
<keyword id="KW-0025">Alternative splicing</keyword>
<keyword id="KW-0539">Nucleus</keyword>
<keyword id="KW-1185">Reference proteome</keyword>
<keyword id="KW-0687">Ribonucleoprotein</keyword>
<keyword id="KW-0690">Ribosome biogenesis</keyword>
<keyword id="KW-0698">rRNA processing</keyword>